<organism>
    <name type="scientific">Escherichia coli O6:K15:H31 (strain 536 / UPEC)</name>
    <dbReference type="NCBI Taxonomy" id="362663"/>
    <lineage>
        <taxon>Bacteria</taxon>
        <taxon>Pseudomonadati</taxon>
        <taxon>Pseudomonadota</taxon>
        <taxon>Gammaproteobacteria</taxon>
        <taxon>Enterobacterales</taxon>
        <taxon>Enterobacteriaceae</taxon>
        <taxon>Escherichia</taxon>
    </lineage>
</organism>
<feature type="chain" id="PRO_0000333093" description="Na(+)/H(+) antiporter NhaB">
    <location>
        <begin position="1"/>
        <end position="513"/>
    </location>
</feature>
<feature type="transmembrane region" description="Helical" evidence="1">
    <location>
        <begin position="23"/>
        <end position="43"/>
    </location>
</feature>
<feature type="transmembrane region" description="Helical" evidence="1">
    <location>
        <begin position="52"/>
        <end position="72"/>
    </location>
</feature>
<feature type="transmembrane region" description="Helical" evidence="1">
    <location>
        <begin position="97"/>
        <end position="117"/>
    </location>
</feature>
<feature type="transmembrane region" description="Helical" evidence="1">
    <location>
        <begin position="120"/>
        <end position="140"/>
    </location>
</feature>
<feature type="transmembrane region" description="Helical" evidence="1">
    <location>
        <begin position="144"/>
        <end position="164"/>
    </location>
</feature>
<feature type="transmembrane region" description="Helical" evidence="1">
    <location>
        <begin position="202"/>
        <end position="222"/>
    </location>
</feature>
<feature type="transmembrane region" description="Helical" evidence="1">
    <location>
        <begin position="238"/>
        <end position="258"/>
    </location>
</feature>
<feature type="transmembrane region" description="Helical" evidence="1">
    <location>
        <begin position="303"/>
        <end position="323"/>
    </location>
</feature>
<feature type="transmembrane region" description="Helical" evidence="1">
    <location>
        <begin position="348"/>
        <end position="368"/>
    </location>
</feature>
<feature type="transmembrane region" description="Helical" evidence="1">
    <location>
        <begin position="391"/>
        <end position="411"/>
    </location>
</feature>
<feature type="transmembrane region" description="Helical" evidence="1">
    <location>
        <begin position="447"/>
        <end position="467"/>
    </location>
</feature>
<feature type="transmembrane region" description="Helical" evidence="1">
    <location>
        <begin position="475"/>
        <end position="495"/>
    </location>
</feature>
<keyword id="KW-0050">Antiport</keyword>
<keyword id="KW-0997">Cell inner membrane</keyword>
<keyword id="KW-1003">Cell membrane</keyword>
<keyword id="KW-0406">Ion transport</keyword>
<keyword id="KW-0472">Membrane</keyword>
<keyword id="KW-0915">Sodium</keyword>
<keyword id="KW-0739">Sodium transport</keyword>
<keyword id="KW-0812">Transmembrane</keyword>
<keyword id="KW-1133">Transmembrane helix</keyword>
<keyword id="KW-0813">Transport</keyword>
<reference key="1">
    <citation type="journal article" date="2006" name="Mol. Microbiol.">
        <title>Role of pathogenicity island-associated integrases in the genome plasticity of uropathogenic Escherichia coli strain 536.</title>
        <authorList>
            <person name="Hochhut B."/>
            <person name="Wilde C."/>
            <person name="Balling G."/>
            <person name="Middendorf B."/>
            <person name="Dobrindt U."/>
            <person name="Brzuszkiewicz E."/>
            <person name="Gottschalk G."/>
            <person name="Carniel E."/>
            <person name="Hacker J."/>
        </authorList>
    </citation>
    <scope>NUCLEOTIDE SEQUENCE [LARGE SCALE GENOMIC DNA]</scope>
    <source>
        <strain>536 / UPEC</strain>
    </source>
</reference>
<accession>Q0TII9</accession>
<dbReference type="EMBL" id="CP000247">
    <property type="protein sequence ID" value="ABG69240.1"/>
    <property type="molecule type" value="Genomic_DNA"/>
</dbReference>
<dbReference type="RefSeq" id="WP_000406377.1">
    <property type="nucleotide sequence ID" value="NC_008253.1"/>
</dbReference>
<dbReference type="SMR" id="Q0TII9"/>
<dbReference type="KEGG" id="ecp:ECP_1229"/>
<dbReference type="HOGENOM" id="CLU_041110_0_0_6"/>
<dbReference type="Proteomes" id="UP000009182">
    <property type="component" value="Chromosome"/>
</dbReference>
<dbReference type="GO" id="GO:0005886">
    <property type="term" value="C:plasma membrane"/>
    <property type="evidence" value="ECO:0007669"/>
    <property type="project" value="UniProtKB-SubCell"/>
</dbReference>
<dbReference type="GO" id="GO:0015385">
    <property type="term" value="F:sodium:proton antiporter activity"/>
    <property type="evidence" value="ECO:0007669"/>
    <property type="project" value="InterPro"/>
</dbReference>
<dbReference type="HAMAP" id="MF_01599">
    <property type="entry name" value="NhaB"/>
    <property type="match status" value="1"/>
</dbReference>
<dbReference type="InterPro" id="IPR004671">
    <property type="entry name" value="Na+/H+_antiporter_NhaB"/>
</dbReference>
<dbReference type="NCBIfam" id="TIGR00774">
    <property type="entry name" value="NhaB"/>
    <property type="match status" value="1"/>
</dbReference>
<dbReference type="NCBIfam" id="NF007093">
    <property type="entry name" value="PRK09547.1"/>
    <property type="match status" value="1"/>
</dbReference>
<dbReference type="PANTHER" id="PTHR43302:SF1">
    <property type="entry name" value="NA(+)_H(+) ANTIPORTER NHAB"/>
    <property type="match status" value="1"/>
</dbReference>
<dbReference type="PANTHER" id="PTHR43302">
    <property type="entry name" value="TRANSPORTER ARSB-RELATED"/>
    <property type="match status" value="1"/>
</dbReference>
<dbReference type="Pfam" id="PF06450">
    <property type="entry name" value="NhaB"/>
    <property type="match status" value="1"/>
</dbReference>
<name>NHAB_ECOL5</name>
<proteinExistence type="inferred from homology"/>
<protein>
    <recommendedName>
        <fullName evidence="1">Na(+)/H(+) antiporter NhaB</fullName>
    </recommendedName>
    <alternativeName>
        <fullName evidence="1">Sodium/proton antiporter NhaB</fullName>
    </alternativeName>
</protein>
<sequence length="513" mass="56675">MEISWGRALWRNFLGQSPDWYKLALIIFLIVNPLIFLISPFVAGWLLVAEFIFTLAMALKCYPLLPGGLLAIEAVFIGMTSAEHVREEVAANLEVLLLLMFMVAGIYFMKQLLLFIFTRLLLSIRSKMLLSLSFCVAAAFLSAFLDALTVVAVVISVAVGFYGIYHRVASSRAEDTDLQDDSHIDKHYKVVLEQFRGFLRSLMMHAGVGTALGGVMTMVGEPQNLIIAKAAGWHFGDFFLRMSPVTVPVLICGLLTCLLVEKLRWFGYGETLPEKVREVLQQFDDQSRNQRTRQDKIRLIVQAIIGVWLVTALALHLAEVGLIGLSVIILATSLTGVTDEHAIGKAFTESLPFTALLTVFFSVVAVIIDQQLFSPIIQFVLQASEHAQLSLFYIFNGLLSSISDNVFVGTIYINEAKAAMESGAITLKQYELLAVAINTGTNLPSVATPNGQAAFLFLLTSALAPLIRLSYGRMVWMALPYTLVLTLVGLLCVEFTLAPVTEWFMQMGWIATL</sequence>
<gene>
    <name evidence="1" type="primary">nhaB</name>
    <name type="ordered locus">ECP_1229</name>
</gene>
<comment type="function">
    <text evidence="1">Na(+)/H(+) antiporter that extrudes sodium in exchange for external protons.</text>
</comment>
<comment type="catalytic activity">
    <reaction evidence="1">
        <text>2 Na(+)(in) + 3 H(+)(out) = 2 Na(+)(out) + 3 H(+)(in)</text>
        <dbReference type="Rhea" id="RHEA:29247"/>
        <dbReference type="ChEBI" id="CHEBI:15378"/>
        <dbReference type="ChEBI" id="CHEBI:29101"/>
    </reaction>
    <physiologicalReaction direction="left-to-right" evidence="1">
        <dbReference type="Rhea" id="RHEA:29248"/>
    </physiologicalReaction>
</comment>
<comment type="subcellular location">
    <subcellularLocation>
        <location evidence="1">Cell inner membrane</location>
        <topology evidence="1">Multi-pass membrane protein</topology>
    </subcellularLocation>
</comment>
<comment type="similarity">
    <text evidence="1">Belongs to the NhaB Na(+)/H(+) (TC 2.A.34) antiporter family.</text>
</comment>
<evidence type="ECO:0000255" key="1">
    <source>
        <dbReference type="HAMAP-Rule" id="MF_01599"/>
    </source>
</evidence>